<evidence type="ECO:0000255" key="1">
    <source>
        <dbReference type="HAMAP-Rule" id="MF_01321"/>
    </source>
</evidence>
<sequence>MASKAKNTAAAAKAEGTAKRRIRKIFGDIHEVVKMPNLIEVQRESYEQFLRSNKEIDYVSGLEKTLRSVFPIRDFAGTAELDFVHYELEPPKYDTTECRQRGITYAAPMKVTLRLIVFEVDQETETRSVLDIKEQDVYMGDMPLMTGNGTFIINGTERVIVSQMHRSPGVLFDHDRGKTHSSGKLLFAARVIPYRGSWLDFEFDAKDIVNVRIDRKRKLPVTALLYALGLDSEEILHFFYNTVTWKRAGGKKGEGWKIPFEPEAWRGQKPTFALVDAKTGEEVFPANQKISPRAANKAQKDGLKDLLLPTEEVFARYAAKDMIDEKTGRIYIEAGDEVGPDHLEALDAAGIDELELLDIDEINTGPWIRNTLKVDKAENRDEGLEAIYKVMRPGEPPTKETAEALFEGLFFDGERYDLSAVGRVKLNMRLDLDAEDTVTTLRKEDILAVVKELVGLKDGKGDVDDIDNLGNRRVRSVGELLENQYRVGLLRMERAVKERMSSVDVSTVMPNDLINAKPAVAAVREFFGSSQLSQFMDQTNPLSEVTHKRRVSALGPGGLTRERAGFEVRDVHPTHYGRICPIETPEGPNIGLINSLSTFARVNKYGFIETPYRVVKDGKVTSEVIYLSAMEEQKHTVAQASAELTEDGTFVEELISARQNGDNLMAPSETVTLMDVSPKQLVSVAASLIPFLENDDANRALMGSNMQRQAVPLVKAEAPWVGTGMEETVARDSGAAITATRGGIVDQVDATRIVIRAIGDVEPGQSGVDIYTLQKFQRSNQNTCINQRPLVKVGETVEAGDVIADGPSTDLGELALGKNTLVAFMPWNGYNYEDSILISERIVKDDVFTSIHIEEFEVMARDTKLGPEDITRDIPNVGEEALRNLDEAGIVYIGAEVHPGDILCGKITPKGESPMTPEEKLLRAIFGEKASDVRDTSLRLPPGVAGTVVEVRVFNRHGIEVDDRTRAIQQEEIERLRKDSQDERTILNRATYNRLRDMLLGQTASAAPKGVKKGVKIDEALLEGIDRHEWFKFAVADDNRQQQIEAVKSQYDEAAKGIDDKFEDRKEKLERGDELAPGVLKMVKVFVAVKRKLQPGDKMAGRHGNKGVISRILPVEDMPFLEDGTPVDIVLNPLGVPSRMNVGQIFETHLGFAARGLGQQVKNALEDWRAANPDPEAGKPPEAVKETLQRVYGDRYEDDIAGRSNAEIIELASNLTAGVPMGTPVFDGAREGDVTTQLEAAGIDSSGQSVLYDGRTGEAFDRKVTVGIIYMLKLHHLVDDKIHARSIGPYSLVTQQPLGGKAQFGGQRFGEMEVWALQAYGAAYTLQEMLTVKSDDVVGRTKVYEAIVKGDDTFEAGIPESFNVLVKEMRSLGLNVELSSLTDGDEDDDGLQIAAE</sequence>
<gene>
    <name evidence="1" type="primary">rpoB</name>
    <name type="ordered locus">ELI_14460</name>
</gene>
<reference key="1">
    <citation type="journal article" date="2009" name="J. Bacteriol.">
        <title>Complete genome sequence of Erythrobacter litoralis HTCC2594.</title>
        <authorList>
            <person name="Oh H.M."/>
            <person name="Giovannoni S.J."/>
            <person name="Ferriera S."/>
            <person name="Johnson J."/>
            <person name="Cho J.C."/>
        </authorList>
    </citation>
    <scope>NUCLEOTIDE SEQUENCE [LARGE SCALE GENOMIC DNA]</scope>
    <source>
        <strain>HTCC2594</strain>
    </source>
</reference>
<keyword id="KW-0240">DNA-directed RNA polymerase</keyword>
<keyword id="KW-0548">Nucleotidyltransferase</keyword>
<keyword id="KW-1185">Reference proteome</keyword>
<keyword id="KW-0804">Transcription</keyword>
<keyword id="KW-0808">Transferase</keyword>
<name>RPOB_ERYLH</name>
<protein>
    <recommendedName>
        <fullName evidence="1">DNA-directed RNA polymerase subunit beta</fullName>
        <shortName evidence="1">RNAP subunit beta</shortName>
        <ecNumber evidence="1">2.7.7.6</ecNumber>
    </recommendedName>
    <alternativeName>
        <fullName evidence="1">RNA polymerase subunit beta</fullName>
    </alternativeName>
    <alternativeName>
        <fullName evidence="1">Transcriptase subunit beta</fullName>
    </alternativeName>
</protein>
<dbReference type="EC" id="2.7.7.6" evidence="1"/>
<dbReference type="EMBL" id="CP000157">
    <property type="protein sequence ID" value="ABC64984.1"/>
    <property type="molecule type" value="Genomic_DNA"/>
</dbReference>
<dbReference type="RefSeq" id="WP_011415806.1">
    <property type="nucleotide sequence ID" value="NC_007722.1"/>
</dbReference>
<dbReference type="SMR" id="Q2N5Q7"/>
<dbReference type="STRING" id="314225.ELI_14460"/>
<dbReference type="KEGG" id="eli:ELI_14460"/>
<dbReference type="eggNOG" id="COG0085">
    <property type="taxonomic scope" value="Bacteria"/>
</dbReference>
<dbReference type="HOGENOM" id="CLU_000524_4_0_5"/>
<dbReference type="OrthoDB" id="9803954at2"/>
<dbReference type="Proteomes" id="UP000008808">
    <property type="component" value="Chromosome"/>
</dbReference>
<dbReference type="GO" id="GO:0000428">
    <property type="term" value="C:DNA-directed RNA polymerase complex"/>
    <property type="evidence" value="ECO:0007669"/>
    <property type="project" value="UniProtKB-KW"/>
</dbReference>
<dbReference type="GO" id="GO:0003677">
    <property type="term" value="F:DNA binding"/>
    <property type="evidence" value="ECO:0007669"/>
    <property type="project" value="UniProtKB-UniRule"/>
</dbReference>
<dbReference type="GO" id="GO:0003899">
    <property type="term" value="F:DNA-directed RNA polymerase activity"/>
    <property type="evidence" value="ECO:0007669"/>
    <property type="project" value="UniProtKB-UniRule"/>
</dbReference>
<dbReference type="GO" id="GO:0032549">
    <property type="term" value="F:ribonucleoside binding"/>
    <property type="evidence" value="ECO:0007669"/>
    <property type="project" value="InterPro"/>
</dbReference>
<dbReference type="GO" id="GO:0006351">
    <property type="term" value="P:DNA-templated transcription"/>
    <property type="evidence" value="ECO:0007669"/>
    <property type="project" value="UniProtKB-UniRule"/>
</dbReference>
<dbReference type="CDD" id="cd00653">
    <property type="entry name" value="RNA_pol_B_RPB2"/>
    <property type="match status" value="1"/>
</dbReference>
<dbReference type="FunFam" id="2.40.50.100:FF:000006">
    <property type="entry name" value="DNA-directed RNA polymerase subunit beta"/>
    <property type="match status" value="1"/>
</dbReference>
<dbReference type="FunFam" id="3.90.1800.10:FF:000001">
    <property type="entry name" value="DNA-directed RNA polymerase subunit beta"/>
    <property type="match status" value="1"/>
</dbReference>
<dbReference type="Gene3D" id="2.40.50.100">
    <property type="match status" value="1"/>
</dbReference>
<dbReference type="Gene3D" id="2.40.50.150">
    <property type="match status" value="1"/>
</dbReference>
<dbReference type="Gene3D" id="3.90.1100.10">
    <property type="match status" value="2"/>
</dbReference>
<dbReference type="Gene3D" id="2.30.150.10">
    <property type="entry name" value="DNA-directed RNA polymerase, beta subunit, external 1 domain"/>
    <property type="match status" value="1"/>
</dbReference>
<dbReference type="Gene3D" id="2.40.270.10">
    <property type="entry name" value="DNA-directed RNA polymerase, subunit 2, domain 6"/>
    <property type="match status" value="1"/>
</dbReference>
<dbReference type="Gene3D" id="3.90.1800.10">
    <property type="entry name" value="RNA polymerase alpha subunit dimerisation domain"/>
    <property type="match status" value="1"/>
</dbReference>
<dbReference type="Gene3D" id="3.90.1110.10">
    <property type="entry name" value="RNA polymerase Rpb2, domain 2"/>
    <property type="match status" value="1"/>
</dbReference>
<dbReference type="HAMAP" id="MF_01321">
    <property type="entry name" value="RNApol_bact_RpoB"/>
    <property type="match status" value="1"/>
</dbReference>
<dbReference type="InterPro" id="IPR042107">
    <property type="entry name" value="DNA-dir_RNA_pol_bsu_ext_1_sf"/>
</dbReference>
<dbReference type="InterPro" id="IPR019462">
    <property type="entry name" value="DNA-dir_RNA_pol_bsu_external_1"/>
</dbReference>
<dbReference type="InterPro" id="IPR015712">
    <property type="entry name" value="DNA-dir_RNA_pol_su2"/>
</dbReference>
<dbReference type="InterPro" id="IPR007120">
    <property type="entry name" value="DNA-dir_RNAP_su2_dom"/>
</dbReference>
<dbReference type="InterPro" id="IPR037033">
    <property type="entry name" value="DNA-dir_RNAP_su2_hyb_sf"/>
</dbReference>
<dbReference type="InterPro" id="IPR010243">
    <property type="entry name" value="RNA_pol_bsu_bac"/>
</dbReference>
<dbReference type="InterPro" id="IPR007121">
    <property type="entry name" value="RNA_pol_bsu_CS"/>
</dbReference>
<dbReference type="InterPro" id="IPR007644">
    <property type="entry name" value="RNA_pol_bsu_protrusion"/>
</dbReference>
<dbReference type="InterPro" id="IPR007642">
    <property type="entry name" value="RNA_pol_Rpb2_2"/>
</dbReference>
<dbReference type="InterPro" id="IPR037034">
    <property type="entry name" value="RNA_pol_Rpb2_2_sf"/>
</dbReference>
<dbReference type="InterPro" id="IPR007645">
    <property type="entry name" value="RNA_pol_Rpb2_3"/>
</dbReference>
<dbReference type="InterPro" id="IPR007641">
    <property type="entry name" value="RNA_pol_Rpb2_7"/>
</dbReference>
<dbReference type="InterPro" id="IPR014724">
    <property type="entry name" value="RNA_pol_RPB2_OB-fold"/>
</dbReference>
<dbReference type="NCBIfam" id="NF001616">
    <property type="entry name" value="PRK00405.1"/>
    <property type="match status" value="1"/>
</dbReference>
<dbReference type="NCBIfam" id="TIGR02013">
    <property type="entry name" value="rpoB"/>
    <property type="match status" value="1"/>
</dbReference>
<dbReference type="PANTHER" id="PTHR20856">
    <property type="entry name" value="DNA-DIRECTED RNA POLYMERASE I SUBUNIT 2"/>
    <property type="match status" value="1"/>
</dbReference>
<dbReference type="Pfam" id="PF04563">
    <property type="entry name" value="RNA_pol_Rpb2_1"/>
    <property type="match status" value="1"/>
</dbReference>
<dbReference type="Pfam" id="PF04561">
    <property type="entry name" value="RNA_pol_Rpb2_2"/>
    <property type="match status" value="2"/>
</dbReference>
<dbReference type="Pfam" id="PF04565">
    <property type="entry name" value="RNA_pol_Rpb2_3"/>
    <property type="match status" value="1"/>
</dbReference>
<dbReference type="Pfam" id="PF10385">
    <property type="entry name" value="RNA_pol_Rpb2_45"/>
    <property type="match status" value="1"/>
</dbReference>
<dbReference type="Pfam" id="PF00562">
    <property type="entry name" value="RNA_pol_Rpb2_6"/>
    <property type="match status" value="1"/>
</dbReference>
<dbReference type="Pfam" id="PF04560">
    <property type="entry name" value="RNA_pol_Rpb2_7"/>
    <property type="match status" value="1"/>
</dbReference>
<dbReference type="SUPFAM" id="SSF64484">
    <property type="entry name" value="beta and beta-prime subunits of DNA dependent RNA-polymerase"/>
    <property type="match status" value="1"/>
</dbReference>
<dbReference type="PROSITE" id="PS01166">
    <property type="entry name" value="RNA_POL_BETA"/>
    <property type="match status" value="1"/>
</dbReference>
<accession>Q2N5Q7</accession>
<proteinExistence type="inferred from homology"/>
<organism>
    <name type="scientific">Erythrobacter litoralis (strain HTCC2594)</name>
    <dbReference type="NCBI Taxonomy" id="314225"/>
    <lineage>
        <taxon>Bacteria</taxon>
        <taxon>Pseudomonadati</taxon>
        <taxon>Pseudomonadota</taxon>
        <taxon>Alphaproteobacteria</taxon>
        <taxon>Sphingomonadales</taxon>
        <taxon>Erythrobacteraceae</taxon>
        <taxon>Erythrobacter/Porphyrobacter group</taxon>
        <taxon>Erythrobacter</taxon>
    </lineage>
</organism>
<comment type="function">
    <text evidence="1">DNA-dependent RNA polymerase catalyzes the transcription of DNA into RNA using the four ribonucleoside triphosphates as substrates.</text>
</comment>
<comment type="catalytic activity">
    <reaction evidence="1">
        <text>RNA(n) + a ribonucleoside 5'-triphosphate = RNA(n+1) + diphosphate</text>
        <dbReference type="Rhea" id="RHEA:21248"/>
        <dbReference type="Rhea" id="RHEA-COMP:14527"/>
        <dbReference type="Rhea" id="RHEA-COMP:17342"/>
        <dbReference type="ChEBI" id="CHEBI:33019"/>
        <dbReference type="ChEBI" id="CHEBI:61557"/>
        <dbReference type="ChEBI" id="CHEBI:140395"/>
        <dbReference type="EC" id="2.7.7.6"/>
    </reaction>
</comment>
<comment type="subunit">
    <text evidence="1">The RNAP catalytic core consists of 2 alpha, 1 beta, 1 beta' and 1 omega subunit. When a sigma factor is associated with the core the holoenzyme is formed, which can initiate transcription.</text>
</comment>
<comment type="similarity">
    <text evidence="1">Belongs to the RNA polymerase beta chain family.</text>
</comment>
<feature type="chain" id="PRO_0000300310" description="DNA-directed RNA polymerase subunit beta">
    <location>
        <begin position="1"/>
        <end position="1396"/>
    </location>
</feature>